<feature type="chain" id="PRO_0000353724" description="Cytochrome c biogenesis protein CcsA">
    <location>
        <begin position="1"/>
        <end position="351"/>
    </location>
</feature>
<feature type="transmembrane region" description="Helical" evidence="2">
    <location>
        <begin position="12"/>
        <end position="32"/>
    </location>
</feature>
<feature type="transmembrane region" description="Helical" evidence="2">
    <location>
        <begin position="37"/>
        <end position="57"/>
    </location>
</feature>
<feature type="transmembrane region" description="Helical" evidence="2">
    <location>
        <begin position="68"/>
        <end position="88"/>
    </location>
</feature>
<feature type="transmembrane region" description="Helical" evidence="2">
    <location>
        <begin position="97"/>
        <end position="117"/>
    </location>
</feature>
<feature type="transmembrane region" description="Helical" evidence="2">
    <location>
        <begin position="143"/>
        <end position="163"/>
    </location>
</feature>
<feature type="transmembrane region" description="Helical" evidence="2">
    <location>
        <begin position="259"/>
        <end position="279"/>
    </location>
</feature>
<feature type="transmembrane region" description="Helical" evidence="2">
    <location>
        <begin position="294"/>
        <end position="314"/>
    </location>
</feature>
<feature type="transmembrane region" description="Helical" evidence="2">
    <location>
        <begin position="320"/>
        <end position="340"/>
    </location>
</feature>
<evidence type="ECO:0000250" key="1"/>
<evidence type="ECO:0000255" key="2">
    <source>
        <dbReference type="HAMAP-Rule" id="MF_01391"/>
    </source>
</evidence>
<organism>
    <name type="scientific">Trichodesmium erythraeum (strain IMS101)</name>
    <dbReference type="NCBI Taxonomy" id="203124"/>
    <lineage>
        <taxon>Bacteria</taxon>
        <taxon>Bacillati</taxon>
        <taxon>Cyanobacteriota</taxon>
        <taxon>Cyanophyceae</taxon>
        <taxon>Oscillatoriophycideae</taxon>
        <taxon>Oscillatoriales</taxon>
        <taxon>Microcoleaceae</taxon>
        <taxon>Trichodesmium</taxon>
    </lineage>
</organism>
<keyword id="KW-0201">Cytochrome c-type biogenesis</keyword>
<keyword id="KW-0472">Membrane</keyword>
<keyword id="KW-0793">Thylakoid</keyword>
<keyword id="KW-0812">Transmembrane</keyword>
<keyword id="KW-1133">Transmembrane helix</keyword>
<proteinExistence type="inferred from homology"/>
<comment type="function">
    <text evidence="2">Required during biogenesis of c-type cytochromes (cytochrome c6 and cytochrome f) at the step of heme attachment.</text>
</comment>
<comment type="subunit">
    <text evidence="1">May interact with ccs1.</text>
</comment>
<comment type="subcellular location">
    <subcellularLocation>
        <location evidence="2">Cellular thylakoid membrane</location>
        <topology evidence="2">Multi-pass membrane protein</topology>
    </subcellularLocation>
</comment>
<comment type="similarity">
    <text evidence="2">Belongs to the CcmF/CycK/Ccl1/NrfE/CcsA family.</text>
</comment>
<sequence>MDLVKLQKSLDNISFGILFATMLIYWLGAAFPRIPYLSILGSTGMAIANLCIATLLGARWLEASYFPISNLYESLFFLTWGITTIHLIAENMSGARLVGVFTSPIAMGISAFAALTLPSNMQISEPLVPALKSNWLMMHVSVMMLSYATLIVGALLAIAFLIITSGQKVELSGSSFGTRSSRNNHFVKYQKNWQLQKERPLLKEIKNNYKPFPQSTKNDHSQTSVLEITEVTQKVDPEIILSPERLNIAQILDNISYRIIGLGFPLLTIGIIAGAVWANEAWGSYWSWDPKETWALITWLVFAAYLHARITKGWQGRKPAILAATGFAVVWVCYLGVNLLGKGLHSYGWFL</sequence>
<dbReference type="EMBL" id="CP000393">
    <property type="protein sequence ID" value="ABG50075.1"/>
    <property type="molecule type" value="Genomic_DNA"/>
</dbReference>
<dbReference type="RefSeq" id="WP_011610468.1">
    <property type="nucleotide sequence ID" value="NC_008312.1"/>
</dbReference>
<dbReference type="SMR" id="Q118J9"/>
<dbReference type="STRING" id="203124.Tery_0633"/>
<dbReference type="KEGG" id="ter:Tery_0633"/>
<dbReference type="eggNOG" id="COG0755">
    <property type="taxonomic scope" value="Bacteria"/>
</dbReference>
<dbReference type="HOGENOM" id="CLU_049710_2_4_3"/>
<dbReference type="OrthoDB" id="9814290at2"/>
<dbReference type="GO" id="GO:0031676">
    <property type="term" value="C:plasma membrane-derived thylakoid membrane"/>
    <property type="evidence" value="ECO:0007669"/>
    <property type="project" value="UniProtKB-SubCell"/>
</dbReference>
<dbReference type="GO" id="GO:0020037">
    <property type="term" value="F:heme binding"/>
    <property type="evidence" value="ECO:0007669"/>
    <property type="project" value="InterPro"/>
</dbReference>
<dbReference type="GO" id="GO:0017004">
    <property type="term" value="P:cytochrome complex assembly"/>
    <property type="evidence" value="ECO:0007669"/>
    <property type="project" value="UniProtKB-UniRule"/>
</dbReference>
<dbReference type="HAMAP" id="MF_01391">
    <property type="entry name" value="CytC_CcsA"/>
    <property type="match status" value="1"/>
</dbReference>
<dbReference type="InterPro" id="IPR002541">
    <property type="entry name" value="Cyt_c_assembly"/>
</dbReference>
<dbReference type="InterPro" id="IPR017562">
    <property type="entry name" value="Cyt_c_biogenesis_CcsA"/>
</dbReference>
<dbReference type="InterPro" id="IPR045062">
    <property type="entry name" value="Cyt_c_biogenesis_CcsA/CcmC"/>
</dbReference>
<dbReference type="NCBIfam" id="TIGR03144">
    <property type="entry name" value="cytochr_II_ccsB"/>
    <property type="match status" value="1"/>
</dbReference>
<dbReference type="PANTHER" id="PTHR30071:SF1">
    <property type="entry name" value="CYTOCHROME B_B6 PROTEIN-RELATED"/>
    <property type="match status" value="1"/>
</dbReference>
<dbReference type="PANTHER" id="PTHR30071">
    <property type="entry name" value="HEME EXPORTER PROTEIN C"/>
    <property type="match status" value="1"/>
</dbReference>
<dbReference type="Pfam" id="PF01578">
    <property type="entry name" value="Cytochrom_C_asm"/>
    <property type="match status" value="1"/>
</dbReference>
<gene>
    <name evidence="2" type="primary">ccsA</name>
    <name type="ordered locus">Tery_0633</name>
</gene>
<name>CCSA_TRIEI</name>
<reference key="1">
    <citation type="journal article" date="2015" name="Proc. Natl. Acad. Sci. U.S.A.">
        <title>Trichodesmium genome maintains abundant, widespread noncoding DNA in situ, despite oligotrophic lifestyle.</title>
        <authorList>
            <person name="Walworth N."/>
            <person name="Pfreundt U."/>
            <person name="Nelson W.C."/>
            <person name="Mincer T."/>
            <person name="Heidelberg J.F."/>
            <person name="Fu F."/>
            <person name="Waterbury J.B."/>
            <person name="Glavina del Rio T."/>
            <person name="Goodwin L."/>
            <person name="Kyrpides N.C."/>
            <person name="Land M.L."/>
            <person name="Woyke T."/>
            <person name="Hutchins D.A."/>
            <person name="Hess W.R."/>
            <person name="Webb E.A."/>
        </authorList>
    </citation>
    <scope>NUCLEOTIDE SEQUENCE [LARGE SCALE GENOMIC DNA]</scope>
    <source>
        <strain>IMS101</strain>
    </source>
</reference>
<accession>Q118J9</accession>
<protein>
    <recommendedName>
        <fullName evidence="2">Cytochrome c biogenesis protein CcsA</fullName>
    </recommendedName>
</protein>